<reference key="1">
    <citation type="submission" date="2009-02" db="EMBL/GenBank/DDBJ databases">
        <title>Genome sequence of Bacillus cereus 03BB102.</title>
        <authorList>
            <person name="Dodson R.J."/>
            <person name="Jackson P."/>
            <person name="Munk A.C."/>
            <person name="Brettin T."/>
            <person name="Bruce D."/>
            <person name="Detter C."/>
            <person name="Tapia R."/>
            <person name="Han C."/>
            <person name="Sutton G."/>
            <person name="Sims D."/>
        </authorList>
    </citation>
    <scope>NUCLEOTIDE SEQUENCE [LARGE SCALE GENOMIC DNA]</scope>
    <source>
        <strain>03BB102</strain>
    </source>
</reference>
<protein>
    <recommendedName>
        <fullName evidence="1">UPF0316 protein BCA_3456</fullName>
    </recommendedName>
</protein>
<comment type="subcellular location">
    <subcellularLocation>
        <location evidence="1">Cell membrane</location>
        <topology evidence="1">Multi-pass membrane protein</topology>
    </subcellularLocation>
</comment>
<comment type="similarity">
    <text evidence="1">Belongs to the UPF0316 family.</text>
</comment>
<proteinExistence type="inferred from homology"/>
<gene>
    <name type="ordered locus">BCA_3456</name>
</gene>
<keyword id="KW-1003">Cell membrane</keyword>
<keyword id="KW-0472">Membrane</keyword>
<keyword id="KW-0812">Transmembrane</keyword>
<keyword id="KW-1133">Transmembrane helix</keyword>
<evidence type="ECO:0000255" key="1">
    <source>
        <dbReference type="HAMAP-Rule" id="MF_01515"/>
    </source>
</evidence>
<feature type="chain" id="PRO_1000185069" description="UPF0316 protein BCA_3456">
    <location>
        <begin position="1"/>
        <end position="182"/>
    </location>
</feature>
<feature type="transmembrane region" description="Helical" evidence="1">
    <location>
        <begin position="6"/>
        <end position="26"/>
    </location>
</feature>
<feature type="transmembrane region" description="Helical" evidence="1">
    <location>
        <begin position="32"/>
        <end position="52"/>
    </location>
</feature>
<feature type="transmembrane region" description="Helical" evidence="1">
    <location>
        <begin position="58"/>
        <end position="78"/>
    </location>
</feature>
<accession>C1ELN0</accession>
<organism>
    <name type="scientific">Bacillus cereus (strain 03BB102)</name>
    <dbReference type="NCBI Taxonomy" id="572264"/>
    <lineage>
        <taxon>Bacteria</taxon>
        <taxon>Bacillati</taxon>
        <taxon>Bacillota</taxon>
        <taxon>Bacilli</taxon>
        <taxon>Bacillales</taxon>
        <taxon>Bacillaceae</taxon>
        <taxon>Bacillus</taxon>
        <taxon>Bacillus cereus group</taxon>
    </lineage>
</organism>
<name>Y3456_BACC3</name>
<dbReference type="EMBL" id="CP001407">
    <property type="protein sequence ID" value="ACO28603.1"/>
    <property type="molecule type" value="Genomic_DNA"/>
</dbReference>
<dbReference type="RefSeq" id="WP_000938435.1">
    <property type="nucleotide sequence ID" value="NZ_CP009318.1"/>
</dbReference>
<dbReference type="SMR" id="C1ELN0"/>
<dbReference type="KEGG" id="bcx:BCA_3456"/>
<dbReference type="PATRIC" id="fig|572264.18.peg.3416"/>
<dbReference type="Proteomes" id="UP000002210">
    <property type="component" value="Chromosome"/>
</dbReference>
<dbReference type="GO" id="GO:0005886">
    <property type="term" value="C:plasma membrane"/>
    <property type="evidence" value="ECO:0007669"/>
    <property type="project" value="UniProtKB-SubCell"/>
</dbReference>
<dbReference type="CDD" id="cd16381">
    <property type="entry name" value="YitT_C_like_1"/>
    <property type="match status" value="1"/>
</dbReference>
<dbReference type="HAMAP" id="MF_01515">
    <property type="entry name" value="UPF0316"/>
    <property type="match status" value="1"/>
</dbReference>
<dbReference type="InterPro" id="IPR019264">
    <property type="entry name" value="DUF2179"/>
</dbReference>
<dbReference type="InterPro" id="IPR044035">
    <property type="entry name" value="DUF5698"/>
</dbReference>
<dbReference type="InterPro" id="IPR022930">
    <property type="entry name" value="UPF0316"/>
</dbReference>
<dbReference type="NCBIfam" id="NF003193">
    <property type="entry name" value="PRK04164.1-4"/>
    <property type="match status" value="1"/>
</dbReference>
<dbReference type="NCBIfam" id="NF003194">
    <property type="entry name" value="PRK04164.1-5"/>
    <property type="match status" value="1"/>
</dbReference>
<dbReference type="PANTHER" id="PTHR40060">
    <property type="entry name" value="UPF0316 PROTEIN YEBE"/>
    <property type="match status" value="1"/>
</dbReference>
<dbReference type="PANTHER" id="PTHR40060:SF1">
    <property type="entry name" value="UPF0316 PROTEIN YEBE"/>
    <property type="match status" value="1"/>
</dbReference>
<dbReference type="Pfam" id="PF10035">
    <property type="entry name" value="DUF2179"/>
    <property type="match status" value="1"/>
</dbReference>
<dbReference type="Pfam" id="PF18955">
    <property type="entry name" value="DUF5698"/>
    <property type="match status" value="1"/>
</dbReference>
<sequence length="182" mass="20457">MLQALLIFVLQIIYVPILTIRTILLVKNQTRSAAAVGLLEGAIYIVSLGIVFQDLSNWMNIVAYVIGFSAGLLLGGYIENKLAIGYITYQVSLLDRCNELVDELRHSGFGVTVFEGEGINSIRYRLDIVAKRSREKELLEIINEIAPKAFMSSYEIRSFKGGYLTKAMKKRALMKKKDHHVS</sequence>